<comment type="function">
    <text evidence="1">Component of the Mediator complex, a coactivator involved in the regulated transcription of nearly all RNA polymerase II-dependent genes. Mediator functions as a bridge to convey information from gene-specific regulatory proteins to the basal RNA polymerase II transcription machinery. Mediator is recruited to promoters by direct interactions with regulatory proteins and serves as a scaffold for the assembly of a functional preinitiation complex with RNA polymerase II and the general transcription factors (By similarity).</text>
</comment>
<comment type="subunit">
    <text evidence="1">Component of the Mediator complex.</text>
</comment>
<comment type="subcellular location">
    <subcellularLocation>
        <location evidence="1">Nucleus</location>
    </subcellularLocation>
</comment>
<comment type="similarity">
    <text evidence="2">Belongs to the Mediator complex subunit 18 family.</text>
</comment>
<gene>
    <name type="primary">med18</name>
    <name type="ORF">DDB_G0285713</name>
</gene>
<accession>Q54MR3</accession>
<organism>
    <name type="scientific">Dictyostelium discoideum</name>
    <name type="common">Social amoeba</name>
    <dbReference type="NCBI Taxonomy" id="44689"/>
    <lineage>
        <taxon>Eukaryota</taxon>
        <taxon>Amoebozoa</taxon>
        <taxon>Evosea</taxon>
        <taxon>Eumycetozoa</taxon>
        <taxon>Dictyostelia</taxon>
        <taxon>Dictyosteliales</taxon>
        <taxon>Dictyosteliaceae</taxon>
        <taxon>Dictyostelium</taxon>
    </lineage>
</organism>
<proteinExistence type="inferred from homology"/>
<keyword id="KW-0010">Activator</keyword>
<keyword id="KW-0539">Nucleus</keyword>
<keyword id="KW-1185">Reference proteome</keyword>
<keyword id="KW-0804">Transcription</keyword>
<keyword id="KW-0805">Transcription regulation</keyword>
<reference key="1">
    <citation type="journal article" date="2005" name="Nature">
        <title>The genome of the social amoeba Dictyostelium discoideum.</title>
        <authorList>
            <person name="Eichinger L."/>
            <person name="Pachebat J.A."/>
            <person name="Gloeckner G."/>
            <person name="Rajandream M.A."/>
            <person name="Sucgang R."/>
            <person name="Berriman M."/>
            <person name="Song J."/>
            <person name="Olsen R."/>
            <person name="Szafranski K."/>
            <person name="Xu Q."/>
            <person name="Tunggal B."/>
            <person name="Kummerfeld S."/>
            <person name="Madera M."/>
            <person name="Konfortov B.A."/>
            <person name="Rivero F."/>
            <person name="Bankier A.T."/>
            <person name="Lehmann R."/>
            <person name="Hamlin N."/>
            <person name="Davies R."/>
            <person name="Gaudet P."/>
            <person name="Fey P."/>
            <person name="Pilcher K."/>
            <person name="Chen G."/>
            <person name="Saunders D."/>
            <person name="Sodergren E.J."/>
            <person name="Davis P."/>
            <person name="Kerhornou A."/>
            <person name="Nie X."/>
            <person name="Hall N."/>
            <person name="Anjard C."/>
            <person name="Hemphill L."/>
            <person name="Bason N."/>
            <person name="Farbrother P."/>
            <person name="Desany B."/>
            <person name="Just E."/>
            <person name="Morio T."/>
            <person name="Rost R."/>
            <person name="Churcher C.M."/>
            <person name="Cooper J."/>
            <person name="Haydock S."/>
            <person name="van Driessche N."/>
            <person name="Cronin A."/>
            <person name="Goodhead I."/>
            <person name="Muzny D.M."/>
            <person name="Mourier T."/>
            <person name="Pain A."/>
            <person name="Lu M."/>
            <person name="Harper D."/>
            <person name="Lindsay R."/>
            <person name="Hauser H."/>
            <person name="James K.D."/>
            <person name="Quiles M."/>
            <person name="Madan Babu M."/>
            <person name="Saito T."/>
            <person name="Buchrieser C."/>
            <person name="Wardroper A."/>
            <person name="Felder M."/>
            <person name="Thangavelu M."/>
            <person name="Johnson D."/>
            <person name="Knights A."/>
            <person name="Loulseged H."/>
            <person name="Mungall K.L."/>
            <person name="Oliver K."/>
            <person name="Price C."/>
            <person name="Quail M.A."/>
            <person name="Urushihara H."/>
            <person name="Hernandez J."/>
            <person name="Rabbinowitsch E."/>
            <person name="Steffen D."/>
            <person name="Sanders M."/>
            <person name="Ma J."/>
            <person name="Kohara Y."/>
            <person name="Sharp S."/>
            <person name="Simmonds M.N."/>
            <person name="Spiegler S."/>
            <person name="Tivey A."/>
            <person name="Sugano S."/>
            <person name="White B."/>
            <person name="Walker D."/>
            <person name="Woodward J.R."/>
            <person name="Winckler T."/>
            <person name="Tanaka Y."/>
            <person name="Shaulsky G."/>
            <person name="Schleicher M."/>
            <person name="Weinstock G.M."/>
            <person name="Rosenthal A."/>
            <person name="Cox E.C."/>
            <person name="Chisholm R.L."/>
            <person name="Gibbs R.A."/>
            <person name="Loomis W.F."/>
            <person name="Platzer M."/>
            <person name="Kay R.R."/>
            <person name="Williams J.G."/>
            <person name="Dear P.H."/>
            <person name="Noegel A.A."/>
            <person name="Barrell B.G."/>
            <person name="Kuspa A."/>
        </authorList>
    </citation>
    <scope>NUCLEOTIDE SEQUENCE [LARGE SCALE GENOMIC DNA]</scope>
    <source>
        <strain>AX4</strain>
    </source>
</reference>
<reference key="2">
    <citation type="journal article" date="2008" name="Nucleic Acids Res.">
        <title>Comparative genomics supports a deep evolutionary origin for the large, four-module transcriptional mediator complex.</title>
        <authorList>
            <person name="Bourbon H.-M."/>
        </authorList>
    </citation>
    <scope>NOMENCLATURE</scope>
</reference>
<protein>
    <recommendedName>
        <fullName>Putative mediator of RNA polymerase II transcription subunit 18</fullName>
    </recommendedName>
    <alternativeName>
        <fullName>Putative mediator complex subunit 18</fullName>
    </alternativeName>
</protein>
<dbReference type="EMBL" id="AAFI02000079">
    <property type="protein sequence ID" value="EAL64694.1"/>
    <property type="molecule type" value="Genomic_DNA"/>
</dbReference>
<dbReference type="RefSeq" id="XP_638230.1">
    <property type="nucleotide sequence ID" value="XM_633138.1"/>
</dbReference>
<dbReference type="SMR" id="Q54MR3"/>
<dbReference type="FunCoup" id="Q54MR3">
    <property type="interactions" value="8"/>
</dbReference>
<dbReference type="STRING" id="44689.Q54MR3"/>
<dbReference type="PaxDb" id="44689-DDB0266918"/>
<dbReference type="EnsemblProtists" id="EAL64694">
    <property type="protein sequence ID" value="EAL64694"/>
    <property type="gene ID" value="DDB_G0285713"/>
</dbReference>
<dbReference type="GeneID" id="8625278"/>
<dbReference type="KEGG" id="ddi:DDB_G0285713"/>
<dbReference type="dictyBase" id="DDB_G0285713">
    <property type="gene designation" value="med18"/>
</dbReference>
<dbReference type="VEuPathDB" id="AmoebaDB:DDB_G0285713"/>
<dbReference type="eggNOG" id="KOG3264">
    <property type="taxonomic scope" value="Eukaryota"/>
</dbReference>
<dbReference type="HOGENOM" id="CLU_1108740_0_0_1"/>
<dbReference type="InParanoid" id="Q54MR3"/>
<dbReference type="OMA" id="ECSLHGI"/>
<dbReference type="PhylomeDB" id="Q54MR3"/>
<dbReference type="PRO" id="PR:Q54MR3"/>
<dbReference type="Proteomes" id="UP000002195">
    <property type="component" value="Chromosome 4"/>
</dbReference>
<dbReference type="GO" id="GO:0070847">
    <property type="term" value="C:core mediator complex"/>
    <property type="evidence" value="ECO:0000318"/>
    <property type="project" value="GO_Central"/>
</dbReference>
<dbReference type="GO" id="GO:0016592">
    <property type="term" value="C:mediator complex"/>
    <property type="evidence" value="ECO:0000318"/>
    <property type="project" value="GO_Central"/>
</dbReference>
<dbReference type="GO" id="GO:0003712">
    <property type="term" value="F:transcription coregulator activity"/>
    <property type="evidence" value="ECO:0000318"/>
    <property type="project" value="GO_Central"/>
</dbReference>
<dbReference type="GO" id="GO:0060261">
    <property type="term" value="P:positive regulation of transcription initiation by RNA polymerase II"/>
    <property type="evidence" value="ECO:0000318"/>
    <property type="project" value="GO_Central"/>
</dbReference>
<dbReference type="GO" id="GO:0006366">
    <property type="term" value="P:transcription by RNA polymerase II"/>
    <property type="evidence" value="ECO:0000250"/>
    <property type="project" value="dictyBase"/>
</dbReference>
<dbReference type="Gene3D" id="2.40.320.10">
    <property type="entry name" value="Hypothetical Protein Pfu-838710-001"/>
    <property type="match status" value="1"/>
</dbReference>
<dbReference type="InterPro" id="IPR019095">
    <property type="entry name" value="Mediator_Med18"/>
</dbReference>
<dbReference type="PANTHER" id="PTHR13321:SF2">
    <property type="entry name" value="MEDIATOR OF RNA POLYMERASE II TRANSCRIPTION SUBUNIT 18"/>
    <property type="match status" value="1"/>
</dbReference>
<dbReference type="PANTHER" id="PTHR13321">
    <property type="entry name" value="MEDIATOR OF RNA POLYMERASE II TRANSCRIPTION, SUBUNIT 18"/>
    <property type="match status" value="1"/>
</dbReference>
<dbReference type="Pfam" id="PF09637">
    <property type="entry name" value="Med18"/>
    <property type="match status" value="1"/>
</dbReference>
<name>MED18_DICDI</name>
<evidence type="ECO:0000250" key="1"/>
<evidence type="ECO:0000305" key="2"/>
<feature type="chain" id="PRO_0000388656" description="Putative mediator of RNA polymerase II transcription subunit 18">
    <location>
        <begin position="1"/>
        <end position="251"/>
    </location>
</feature>
<sequence length="251" mass="28507">MFQQNKHHQQQQQQQQQQGVVQSGVASATVNNPSESIVAGNIYECSLHGILSTPSSTFIQRAKGMMRCEHPVSYKEMVFKSTVQSAGPSWAEGSILPSEIHVRYEKNTVYVRYVGVPQIKDNINAMIRNVVDIKSSETFFIYLENLGYVKDYEYFVDGYQYSTYNLSLFLVNHRRVLNDGTKGELLNKHSMVELQCLSGEEGFVAAAEYLNTYAEYLYPFVELIKFDHRLLTAENSNTPTTNVNVVGGYNR</sequence>